<keyword id="KW-0106">Calcium</keyword>
<keyword id="KW-0966">Cell projection</keyword>
<keyword id="KW-0479">Metal-binding</keyword>
<keyword id="KW-0597">Phosphoprotein</keyword>
<keyword id="KW-1185">Reference proteome</keyword>
<keyword id="KW-0677">Repeat</keyword>
<keyword id="KW-0770">Synapse</keyword>
<name>CALB2_BOVIN</name>
<accession>Q3ZBY3</accession>
<feature type="chain" id="PRO_0000253721" description="Calretinin">
    <location>
        <begin position="1"/>
        <end position="271"/>
    </location>
</feature>
<feature type="domain" description="EF-hand 1" evidence="3">
    <location>
        <begin position="16"/>
        <end position="51"/>
    </location>
</feature>
<feature type="domain" description="EF-hand 2" evidence="3">
    <location>
        <begin position="63"/>
        <end position="98"/>
    </location>
</feature>
<feature type="domain" description="EF-hand 3" evidence="3">
    <location>
        <begin position="107"/>
        <end position="142"/>
    </location>
</feature>
<feature type="domain" description="EF-hand 4" evidence="3">
    <location>
        <begin position="151"/>
        <end position="186"/>
    </location>
</feature>
<feature type="domain" description="EF-hand 5" evidence="3">
    <location>
        <begin position="195"/>
        <end position="230"/>
    </location>
</feature>
<feature type="domain" description="EF-hand 6" evidence="4">
    <location>
        <begin position="235"/>
        <end position="270"/>
    </location>
</feature>
<feature type="binding site" evidence="3">
    <location>
        <position position="29"/>
    </location>
    <ligand>
        <name>Ca(2+)</name>
        <dbReference type="ChEBI" id="CHEBI:29108"/>
        <label>1</label>
    </ligand>
</feature>
<feature type="binding site" evidence="3">
    <location>
        <position position="31"/>
    </location>
    <ligand>
        <name>Ca(2+)</name>
        <dbReference type="ChEBI" id="CHEBI:29108"/>
        <label>1</label>
    </ligand>
</feature>
<feature type="binding site" evidence="3">
    <location>
        <position position="33"/>
    </location>
    <ligand>
        <name>Ca(2+)</name>
        <dbReference type="ChEBI" id="CHEBI:29108"/>
        <label>1</label>
    </ligand>
</feature>
<feature type="binding site" evidence="3">
    <location>
        <position position="35"/>
    </location>
    <ligand>
        <name>Ca(2+)</name>
        <dbReference type="ChEBI" id="CHEBI:29108"/>
        <label>1</label>
    </ligand>
</feature>
<feature type="binding site" evidence="3">
    <location>
        <position position="40"/>
    </location>
    <ligand>
        <name>Ca(2+)</name>
        <dbReference type="ChEBI" id="CHEBI:29108"/>
        <label>1</label>
    </ligand>
</feature>
<feature type="binding site" evidence="3">
    <location>
        <position position="76"/>
    </location>
    <ligand>
        <name>Ca(2+)</name>
        <dbReference type="ChEBI" id="CHEBI:29108"/>
        <label>2</label>
    </ligand>
</feature>
<feature type="binding site" evidence="3">
    <location>
        <position position="78"/>
    </location>
    <ligand>
        <name>Ca(2+)</name>
        <dbReference type="ChEBI" id="CHEBI:29108"/>
        <label>2</label>
    </ligand>
</feature>
<feature type="binding site" evidence="3">
    <location>
        <position position="80"/>
    </location>
    <ligand>
        <name>Ca(2+)</name>
        <dbReference type="ChEBI" id="CHEBI:29108"/>
        <label>2</label>
    </ligand>
</feature>
<feature type="binding site" evidence="3">
    <location>
        <position position="82"/>
    </location>
    <ligand>
        <name>Ca(2+)</name>
        <dbReference type="ChEBI" id="CHEBI:29108"/>
        <label>2</label>
    </ligand>
</feature>
<feature type="binding site" evidence="3">
    <location>
        <position position="87"/>
    </location>
    <ligand>
        <name>Ca(2+)</name>
        <dbReference type="ChEBI" id="CHEBI:29108"/>
        <label>2</label>
    </ligand>
</feature>
<feature type="binding site" evidence="3">
    <location>
        <position position="120"/>
    </location>
    <ligand>
        <name>Ca(2+)</name>
        <dbReference type="ChEBI" id="CHEBI:29108"/>
        <label>3</label>
    </ligand>
</feature>
<feature type="binding site" evidence="3">
    <location>
        <position position="122"/>
    </location>
    <ligand>
        <name>Ca(2+)</name>
        <dbReference type="ChEBI" id="CHEBI:29108"/>
        <label>3</label>
    </ligand>
</feature>
<feature type="binding site" evidence="3">
    <location>
        <position position="124"/>
    </location>
    <ligand>
        <name>Ca(2+)</name>
        <dbReference type="ChEBI" id="CHEBI:29108"/>
        <label>3</label>
    </ligand>
</feature>
<feature type="binding site" evidence="3">
    <location>
        <position position="126"/>
    </location>
    <ligand>
        <name>Ca(2+)</name>
        <dbReference type="ChEBI" id="CHEBI:29108"/>
        <label>3</label>
    </ligand>
</feature>
<feature type="binding site" evidence="3">
    <location>
        <position position="131"/>
    </location>
    <ligand>
        <name>Ca(2+)</name>
        <dbReference type="ChEBI" id="CHEBI:29108"/>
        <label>3</label>
    </ligand>
</feature>
<feature type="binding site" evidence="3">
    <location>
        <position position="164"/>
    </location>
    <ligand>
        <name>Ca(2+)</name>
        <dbReference type="ChEBI" id="CHEBI:29108"/>
        <label>4</label>
    </ligand>
</feature>
<feature type="binding site" evidence="3">
    <location>
        <position position="166"/>
    </location>
    <ligand>
        <name>Ca(2+)</name>
        <dbReference type="ChEBI" id="CHEBI:29108"/>
        <label>4</label>
    </ligand>
</feature>
<feature type="binding site" evidence="3">
    <location>
        <position position="168"/>
    </location>
    <ligand>
        <name>Ca(2+)</name>
        <dbReference type="ChEBI" id="CHEBI:29108"/>
        <label>4</label>
    </ligand>
</feature>
<feature type="binding site" evidence="3">
    <location>
        <position position="170"/>
    </location>
    <ligand>
        <name>Ca(2+)</name>
        <dbReference type="ChEBI" id="CHEBI:29108"/>
        <label>4</label>
    </ligand>
</feature>
<feature type="binding site" evidence="3">
    <location>
        <position position="175"/>
    </location>
    <ligand>
        <name>Ca(2+)</name>
        <dbReference type="ChEBI" id="CHEBI:29108"/>
        <label>4</label>
    </ligand>
</feature>
<feature type="binding site" evidence="3">
    <location>
        <position position="208"/>
    </location>
    <ligand>
        <name>Ca(2+)</name>
        <dbReference type="ChEBI" id="CHEBI:29108"/>
        <label>5</label>
    </ligand>
</feature>
<feature type="binding site" evidence="3">
    <location>
        <position position="210"/>
    </location>
    <ligand>
        <name>Ca(2+)</name>
        <dbReference type="ChEBI" id="CHEBI:29108"/>
        <label>5</label>
    </ligand>
</feature>
<feature type="binding site" evidence="3">
    <location>
        <position position="212"/>
    </location>
    <ligand>
        <name>Ca(2+)</name>
        <dbReference type="ChEBI" id="CHEBI:29108"/>
        <label>5</label>
    </ligand>
</feature>
<feature type="binding site" evidence="3">
    <location>
        <position position="214"/>
    </location>
    <ligand>
        <name>Ca(2+)</name>
        <dbReference type="ChEBI" id="CHEBI:29108"/>
        <label>5</label>
    </ligand>
</feature>
<feature type="binding site" evidence="3">
    <location>
        <position position="219"/>
    </location>
    <ligand>
        <name>Ca(2+)</name>
        <dbReference type="ChEBI" id="CHEBI:29108"/>
        <label>5</label>
    </ligand>
</feature>
<feature type="modified residue" description="Phosphotyrosine" evidence="1">
    <location>
        <position position="214"/>
    </location>
</feature>
<protein>
    <recommendedName>
        <fullName>Calretinin</fullName>
        <shortName>CR</shortName>
    </recommendedName>
</protein>
<gene>
    <name type="primary">CALB2</name>
</gene>
<sequence length="271" mass="31423">MAGPQQQPPYLHLAELTATQFLEIWKHFDADGNGYIEGKELENFFQELEKARKGSGMVSKSDNLGEKMKEFMQKYDKNSDGKIEMAELAQILPTEENFLLCFRQHVGSSTEFMEAWRKYDTDRSGYIEANELKGFLSDLLKKANRPYDEPKLQEYTQTILRMFDLNGDGKLGLSEMSRLLPVQENFLLKFQGMKLTSEEFNAIFTFYDKDGSGYIDENELDALLKDLYEKNKKEMNIQQLTSYRKSVMSLAEAEKLYRKDLEIVLCSEPPL</sequence>
<reference key="1">
    <citation type="submission" date="2005-08" db="EMBL/GenBank/DDBJ databases">
        <authorList>
            <consortium name="NIH - Mammalian Gene Collection (MGC) project"/>
        </authorList>
    </citation>
    <scope>NUCLEOTIDE SEQUENCE [LARGE SCALE MRNA]</scope>
    <source>
        <strain>Hereford</strain>
        <tissue>Hypothalamus</tissue>
    </source>
</reference>
<proteinExistence type="evidence at transcript level"/>
<organism>
    <name type="scientific">Bos taurus</name>
    <name type="common">Bovine</name>
    <dbReference type="NCBI Taxonomy" id="9913"/>
    <lineage>
        <taxon>Eukaryota</taxon>
        <taxon>Metazoa</taxon>
        <taxon>Chordata</taxon>
        <taxon>Craniata</taxon>
        <taxon>Vertebrata</taxon>
        <taxon>Euteleostomi</taxon>
        <taxon>Mammalia</taxon>
        <taxon>Eutheria</taxon>
        <taxon>Laurasiatheria</taxon>
        <taxon>Artiodactyla</taxon>
        <taxon>Ruminantia</taxon>
        <taxon>Pecora</taxon>
        <taxon>Bovidae</taxon>
        <taxon>Bovinae</taxon>
        <taxon>Bos</taxon>
    </lineage>
</organism>
<evidence type="ECO:0000250" key="1">
    <source>
        <dbReference type="UniProtKB" id="P47728"/>
    </source>
</evidence>
<evidence type="ECO:0000250" key="2">
    <source>
        <dbReference type="UniProtKB" id="Q08331"/>
    </source>
</evidence>
<evidence type="ECO:0000255" key="3">
    <source>
        <dbReference type="PROSITE-ProRule" id="PRU00448"/>
    </source>
</evidence>
<evidence type="ECO:0000305" key="4"/>
<dbReference type="EMBL" id="BC103038">
    <property type="protein sequence ID" value="AAI03039.1"/>
    <property type="molecule type" value="mRNA"/>
</dbReference>
<dbReference type="RefSeq" id="NP_001030365.1">
    <property type="nucleotide sequence ID" value="NM_001035288.1"/>
</dbReference>
<dbReference type="SMR" id="Q3ZBY3"/>
<dbReference type="FunCoup" id="Q3ZBY3">
    <property type="interactions" value="438"/>
</dbReference>
<dbReference type="STRING" id="9913.ENSBTAP00000001426"/>
<dbReference type="PaxDb" id="9913-ENSBTAP00000001426"/>
<dbReference type="PeptideAtlas" id="Q3ZBY3"/>
<dbReference type="GeneID" id="513947"/>
<dbReference type="KEGG" id="bta:513947"/>
<dbReference type="CTD" id="794"/>
<dbReference type="eggNOG" id="KOG0027">
    <property type="taxonomic scope" value="Eukaryota"/>
</dbReference>
<dbReference type="InParanoid" id="Q3ZBY3"/>
<dbReference type="OrthoDB" id="428774at2759"/>
<dbReference type="Proteomes" id="UP000009136">
    <property type="component" value="Unplaced"/>
</dbReference>
<dbReference type="GO" id="GO:0005829">
    <property type="term" value="C:cytosol"/>
    <property type="evidence" value="ECO:0000318"/>
    <property type="project" value="GO_Central"/>
</dbReference>
<dbReference type="GO" id="GO:0044293">
    <property type="term" value="C:dendriole"/>
    <property type="evidence" value="ECO:0000250"/>
    <property type="project" value="UniProtKB"/>
</dbReference>
<dbReference type="GO" id="GO:0030425">
    <property type="term" value="C:dendrite"/>
    <property type="evidence" value="ECO:0000318"/>
    <property type="project" value="GO_Central"/>
</dbReference>
<dbReference type="GO" id="GO:0005634">
    <property type="term" value="C:nucleus"/>
    <property type="evidence" value="ECO:0000318"/>
    <property type="project" value="GO_Central"/>
</dbReference>
<dbReference type="GO" id="GO:0098688">
    <property type="term" value="C:parallel fiber to Purkinje cell synapse"/>
    <property type="evidence" value="ECO:0000250"/>
    <property type="project" value="UniProtKB"/>
</dbReference>
<dbReference type="GO" id="GO:0045202">
    <property type="term" value="C:synapse"/>
    <property type="evidence" value="ECO:0000318"/>
    <property type="project" value="GO_Central"/>
</dbReference>
<dbReference type="GO" id="GO:0043195">
    <property type="term" value="C:terminal bouton"/>
    <property type="evidence" value="ECO:0000318"/>
    <property type="project" value="GO_Central"/>
</dbReference>
<dbReference type="GO" id="GO:0005509">
    <property type="term" value="F:calcium ion binding"/>
    <property type="evidence" value="ECO:0000318"/>
    <property type="project" value="GO_Central"/>
</dbReference>
<dbReference type="GO" id="GO:0099534">
    <property type="term" value="F:calcium ion binding involved in regulation of presynaptic cytosolic calcium ion concentration"/>
    <property type="evidence" value="ECO:0000250"/>
    <property type="project" value="UniProtKB"/>
</dbReference>
<dbReference type="GO" id="GO:0006874">
    <property type="term" value="P:intracellular calcium ion homeostasis"/>
    <property type="evidence" value="ECO:0000250"/>
    <property type="project" value="UniProtKB"/>
</dbReference>
<dbReference type="GO" id="GO:0048167">
    <property type="term" value="P:regulation of synaptic plasticity"/>
    <property type="evidence" value="ECO:0000250"/>
    <property type="project" value="UniProtKB"/>
</dbReference>
<dbReference type="GO" id="GO:0099536">
    <property type="term" value="P:synaptic signaling"/>
    <property type="evidence" value="ECO:0000250"/>
    <property type="project" value="UniProtKB"/>
</dbReference>
<dbReference type="CDD" id="cd16177">
    <property type="entry name" value="EFh_HEF_CR"/>
    <property type="match status" value="1"/>
</dbReference>
<dbReference type="FunFam" id="1.10.238.10:FF:000054">
    <property type="entry name" value="Calbindin 2"/>
    <property type="match status" value="1"/>
</dbReference>
<dbReference type="FunFam" id="1.10.238.10:FF:000165">
    <property type="entry name" value="Calbindin 2"/>
    <property type="match status" value="1"/>
</dbReference>
<dbReference type="FunFam" id="1.10.238.10:FF:000116">
    <property type="entry name" value="calretinin isoform X2"/>
    <property type="match status" value="1"/>
</dbReference>
<dbReference type="Gene3D" id="1.10.238.10">
    <property type="entry name" value="EF-hand"/>
    <property type="match status" value="3"/>
</dbReference>
<dbReference type="InterPro" id="IPR029646">
    <property type="entry name" value="CALB2"/>
</dbReference>
<dbReference type="InterPro" id="IPR051001">
    <property type="entry name" value="Calbindin_Ca-bind"/>
</dbReference>
<dbReference type="InterPro" id="IPR011992">
    <property type="entry name" value="EF-hand-dom_pair"/>
</dbReference>
<dbReference type="InterPro" id="IPR018247">
    <property type="entry name" value="EF_Hand_1_Ca_BS"/>
</dbReference>
<dbReference type="InterPro" id="IPR002048">
    <property type="entry name" value="EF_hand_dom"/>
</dbReference>
<dbReference type="PANTHER" id="PTHR19972">
    <property type="entry name" value="CALBINDIN"/>
    <property type="match status" value="1"/>
</dbReference>
<dbReference type="PANTHER" id="PTHR19972:SF4">
    <property type="entry name" value="CALRETININ"/>
    <property type="match status" value="1"/>
</dbReference>
<dbReference type="Pfam" id="PF00036">
    <property type="entry name" value="EF-hand_1"/>
    <property type="match status" value="1"/>
</dbReference>
<dbReference type="Pfam" id="PF13499">
    <property type="entry name" value="EF-hand_7"/>
    <property type="match status" value="2"/>
</dbReference>
<dbReference type="SMART" id="SM00054">
    <property type="entry name" value="EFh"/>
    <property type="match status" value="5"/>
</dbReference>
<dbReference type="SUPFAM" id="SSF47473">
    <property type="entry name" value="EF-hand"/>
    <property type="match status" value="2"/>
</dbReference>
<dbReference type="PROSITE" id="PS00018">
    <property type="entry name" value="EF_HAND_1"/>
    <property type="match status" value="5"/>
</dbReference>
<dbReference type="PROSITE" id="PS50222">
    <property type="entry name" value="EF_HAND_2"/>
    <property type="match status" value="5"/>
</dbReference>
<comment type="function">
    <text evidence="1 2">Calcium-binding protein involved in calcium homeostasis and signal transduction. It plays a critical role in buffering intracellular calcium levels and modulating calcium-dependent signaling pathways. Predominantly expressed in specific neuronal populations, influences synaptic plasticity and neuronal excitability, contributing to learning and memory (By similarity). During embryonic development, it facilitates neuronal differentiation and maturation (By similarity).</text>
</comment>
<comment type="subcellular location">
    <subcellularLocation>
        <location evidence="2">Synapse</location>
    </subcellularLocation>
    <subcellularLocation>
        <location evidence="2">Cell projection</location>
        <location evidence="2">Dendrite</location>
    </subcellularLocation>
    <text evidence="2">Located in dendrioles, small dendrites that makes up a brush structure found as the terminal specialization of a dendrite of a unipolar brush cell.</text>
</comment>
<comment type="similarity">
    <text evidence="4">Belongs to the calbindin family.</text>
</comment>